<accession>B5FLD6</accession>
<dbReference type="EC" id="5.3.1.5" evidence="1"/>
<dbReference type="EMBL" id="CP001144">
    <property type="protein sequence ID" value="ACH73638.1"/>
    <property type="molecule type" value="Genomic_DNA"/>
</dbReference>
<dbReference type="RefSeq" id="WP_001149563.1">
    <property type="nucleotide sequence ID" value="NC_011205.1"/>
</dbReference>
<dbReference type="SMR" id="B5FLD6"/>
<dbReference type="KEGG" id="sed:SeD_A4044"/>
<dbReference type="HOGENOM" id="CLU_037261_1_0_6"/>
<dbReference type="Proteomes" id="UP000008322">
    <property type="component" value="Chromosome"/>
</dbReference>
<dbReference type="GO" id="GO:0005737">
    <property type="term" value="C:cytoplasm"/>
    <property type="evidence" value="ECO:0007669"/>
    <property type="project" value="UniProtKB-SubCell"/>
</dbReference>
<dbReference type="GO" id="GO:0000287">
    <property type="term" value="F:magnesium ion binding"/>
    <property type="evidence" value="ECO:0007669"/>
    <property type="project" value="UniProtKB-UniRule"/>
</dbReference>
<dbReference type="GO" id="GO:0009045">
    <property type="term" value="F:xylose isomerase activity"/>
    <property type="evidence" value="ECO:0007669"/>
    <property type="project" value="UniProtKB-UniRule"/>
</dbReference>
<dbReference type="GO" id="GO:0042732">
    <property type="term" value="P:D-xylose metabolic process"/>
    <property type="evidence" value="ECO:0007669"/>
    <property type="project" value="UniProtKB-UniRule"/>
</dbReference>
<dbReference type="FunFam" id="3.20.20.150:FF:000002">
    <property type="entry name" value="Xylose isomerase"/>
    <property type="match status" value="1"/>
</dbReference>
<dbReference type="Gene3D" id="3.20.20.150">
    <property type="entry name" value="Divalent-metal-dependent TIM barrel enzymes"/>
    <property type="match status" value="1"/>
</dbReference>
<dbReference type="HAMAP" id="MF_00455">
    <property type="entry name" value="Xylose_isom_A"/>
    <property type="match status" value="1"/>
</dbReference>
<dbReference type="InterPro" id="IPR036237">
    <property type="entry name" value="Xyl_isomerase-like_sf"/>
</dbReference>
<dbReference type="InterPro" id="IPR013452">
    <property type="entry name" value="Xylose_isom_bac"/>
</dbReference>
<dbReference type="InterPro" id="IPR001998">
    <property type="entry name" value="Xylose_isomerase"/>
</dbReference>
<dbReference type="NCBIfam" id="NF003998">
    <property type="entry name" value="PRK05474.1"/>
    <property type="match status" value="1"/>
</dbReference>
<dbReference type="NCBIfam" id="TIGR02630">
    <property type="entry name" value="xylose_isom_A"/>
    <property type="match status" value="1"/>
</dbReference>
<dbReference type="PANTHER" id="PTHR48408">
    <property type="match status" value="1"/>
</dbReference>
<dbReference type="PANTHER" id="PTHR48408:SF1">
    <property type="entry name" value="XYLOSE ISOMERASE"/>
    <property type="match status" value="1"/>
</dbReference>
<dbReference type="PRINTS" id="PR00688">
    <property type="entry name" value="XYLOSISMRASE"/>
</dbReference>
<dbReference type="SUPFAM" id="SSF51658">
    <property type="entry name" value="Xylose isomerase-like"/>
    <property type="match status" value="1"/>
</dbReference>
<dbReference type="PROSITE" id="PS51415">
    <property type="entry name" value="XYLOSE_ISOMERASE"/>
    <property type="match status" value="1"/>
</dbReference>
<proteinExistence type="inferred from homology"/>
<reference key="1">
    <citation type="journal article" date="2011" name="J. Bacteriol.">
        <title>Comparative genomics of 28 Salmonella enterica isolates: evidence for CRISPR-mediated adaptive sublineage evolution.</title>
        <authorList>
            <person name="Fricke W.F."/>
            <person name="Mammel M.K."/>
            <person name="McDermott P.F."/>
            <person name="Tartera C."/>
            <person name="White D.G."/>
            <person name="Leclerc J.E."/>
            <person name="Ravel J."/>
            <person name="Cebula T.A."/>
        </authorList>
    </citation>
    <scope>NUCLEOTIDE SEQUENCE [LARGE SCALE GENOMIC DNA]</scope>
    <source>
        <strain>CT_02021853</strain>
    </source>
</reference>
<gene>
    <name evidence="1" type="primary">xylA</name>
    <name type="ordered locus">SeD_A4044</name>
</gene>
<feature type="chain" id="PRO_1000200304" description="Xylose isomerase">
    <location>
        <begin position="1"/>
        <end position="440"/>
    </location>
</feature>
<feature type="active site" evidence="1">
    <location>
        <position position="101"/>
    </location>
</feature>
<feature type="active site" evidence="1">
    <location>
        <position position="104"/>
    </location>
</feature>
<feature type="binding site" evidence="1">
    <location>
        <position position="232"/>
    </location>
    <ligand>
        <name>Mg(2+)</name>
        <dbReference type="ChEBI" id="CHEBI:18420"/>
        <label>1</label>
    </ligand>
</feature>
<feature type="binding site" evidence="1">
    <location>
        <position position="268"/>
    </location>
    <ligand>
        <name>Mg(2+)</name>
        <dbReference type="ChEBI" id="CHEBI:18420"/>
        <label>1</label>
    </ligand>
</feature>
<feature type="binding site" evidence="1">
    <location>
        <position position="268"/>
    </location>
    <ligand>
        <name>Mg(2+)</name>
        <dbReference type="ChEBI" id="CHEBI:18420"/>
        <label>2</label>
    </ligand>
</feature>
<feature type="binding site" evidence="1">
    <location>
        <position position="271"/>
    </location>
    <ligand>
        <name>Mg(2+)</name>
        <dbReference type="ChEBI" id="CHEBI:18420"/>
        <label>2</label>
    </ligand>
</feature>
<feature type="binding site" evidence="1">
    <location>
        <position position="296"/>
    </location>
    <ligand>
        <name>Mg(2+)</name>
        <dbReference type="ChEBI" id="CHEBI:18420"/>
        <label>1</label>
    </ligand>
</feature>
<feature type="binding site" evidence="1">
    <location>
        <position position="307"/>
    </location>
    <ligand>
        <name>Mg(2+)</name>
        <dbReference type="ChEBI" id="CHEBI:18420"/>
        <label>2</label>
    </ligand>
</feature>
<feature type="binding site" evidence="1">
    <location>
        <position position="309"/>
    </location>
    <ligand>
        <name>Mg(2+)</name>
        <dbReference type="ChEBI" id="CHEBI:18420"/>
        <label>2</label>
    </ligand>
</feature>
<feature type="binding site" evidence="1">
    <location>
        <position position="339"/>
    </location>
    <ligand>
        <name>Mg(2+)</name>
        <dbReference type="ChEBI" id="CHEBI:18420"/>
        <label>1</label>
    </ligand>
</feature>
<comment type="catalytic activity">
    <reaction evidence="1">
        <text>alpha-D-xylose = alpha-D-xylulofuranose</text>
        <dbReference type="Rhea" id="RHEA:22816"/>
        <dbReference type="ChEBI" id="CHEBI:28518"/>
        <dbReference type="ChEBI" id="CHEBI:188998"/>
        <dbReference type="EC" id="5.3.1.5"/>
    </reaction>
</comment>
<comment type="cofactor">
    <cofactor evidence="1">
        <name>Mg(2+)</name>
        <dbReference type="ChEBI" id="CHEBI:18420"/>
    </cofactor>
    <text evidence="1">Binds 2 magnesium ions per subunit.</text>
</comment>
<comment type="subunit">
    <text evidence="1">Homotetramer.</text>
</comment>
<comment type="subcellular location">
    <subcellularLocation>
        <location evidence="1">Cytoplasm</location>
    </subcellularLocation>
</comment>
<comment type="similarity">
    <text evidence="1">Belongs to the xylose isomerase family.</text>
</comment>
<sequence length="440" mass="49731">MQAYFDQLDRVRYEGPQSTNPLAFRHYNPDELVLGKRMEDHLRFAACYWHTFCWNGADMFGVGAFNRPWQQPGEALELAKRKADVAFEFFHKLNVPFYCFHDVDVSPEGASLKEYKNNFAQMVDVLAAKQEQSGVKLLWGTANCFTNPRYGAGAATNPDPEVFSWAATQVVTAMNATHKLGGENYVLWGGREGYETLLNTDLRQEREQIGRFMQMVVEHKHKMGFQGTLLIEPKPQEPTKHQYDYDVATVYGFLKQFGLEKEIKVNIEANHATLAGHSFHHEIATAIALGIFGSVDANRGDAQLGWDTDQFPISVEENALVMYEILKAGGFTTGGLNFDAKVRRQSTDKYDLFYGHIGAMDTMALSLKIAARMVEDGELDKRVAKRYAGWNSELGQQILKGQLSLGELAQYAEQHNLAPVHQSGHQELLENLVNRYLFDK</sequence>
<name>XYLA_SALDC</name>
<keyword id="KW-0119">Carbohydrate metabolism</keyword>
<keyword id="KW-0963">Cytoplasm</keyword>
<keyword id="KW-0413">Isomerase</keyword>
<keyword id="KW-0460">Magnesium</keyword>
<keyword id="KW-0479">Metal-binding</keyword>
<keyword id="KW-0859">Xylose metabolism</keyword>
<evidence type="ECO:0000255" key="1">
    <source>
        <dbReference type="HAMAP-Rule" id="MF_00455"/>
    </source>
</evidence>
<protein>
    <recommendedName>
        <fullName evidence="1">Xylose isomerase</fullName>
        <ecNumber evidence="1">5.3.1.5</ecNumber>
    </recommendedName>
</protein>
<organism>
    <name type="scientific">Salmonella dublin (strain CT_02021853)</name>
    <dbReference type="NCBI Taxonomy" id="439851"/>
    <lineage>
        <taxon>Bacteria</taxon>
        <taxon>Pseudomonadati</taxon>
        <taxon>Pseudomonadota</taxon>
        <taxon>Gammaproteobacteria</taxon>
        <taxon>Enterobacterales</taxon>
        <taxon>Enterobacteriaceae</taxon>
        <taxon>Salmonella</taxon>
    </lineage>
</organism>